<accession>Q0ABF6</accession>
<sequence length="144" mass="15051">MRLNSLRPAAGSRPDANRVGRGAGTGNGKTAGRGHKGQHSRSGGFTKVGFEGGQMPLQRRVPKVGFRSRKALTRAEVRLSELNKVEGDTVDLLTLKQAGIINRGVRTAKVIASGKVERAVTVQGLAVTKGAREAIEAAGGKVEA</sequence>
<proteinExistence type="inferred from homology"/>
<reference key="1">
    <citation type="submission" date="2006-08" db="EMBL/GenBank/DDBJ databases">
        <title>Complete sequence of Alkalilimnicola ehrilichei MLHE-1.</title>
        <authorList>
            <person name="Copeland A."/>
            <person name="Lucas S."/>
            <person name="Lapidus A."/>
            <person name="Barry K."/>
            <person name="Detter J.C."/>
            <person name="Glavina del Rio T."/>
            <person name="Hammon N."/>
            <person name="Israni S."/>
            <person name="Dalin E."/>
            <person name="Tice H."/>
            <person name="Pitluck S."/>
            <person name="Sims D."/>
            <person name="Brettin T."/>
            <person name="Bruce D."/>
            <person name="Han C."/>
            <person name="Tapia R."/>
            <person name="Gilna P."/>
            <person name="Schmutz J."/>
            <person name="Larimer F."/>
            <person name="Land M."/>
            <person name="Hauser L."/>
            <person name="Kyrpides N."/>
            <person name="Mikhailova N."/>
            <person name="Oremland R.S."/>
            <person name="Hoeft S.E."/>
            <person name="Switzer-Blum J."/>
            <person name="Kulp T."/>
            <person name="King G."/>
            <person name="Tabita R."/>
            <person name="Witte B."/>
            <person name="Santini J.M."/>
            <person name="Basu P."/>
            <person name="Hollibaugh J.T."/>
            <person name="Xie G."/>
            <person name="Stolz J.F."/>
            <person name="Richardson P."/>
        </authorList>
    </citation>
    <scope>NUCLEOTIDE SEQUENCE [LARGE SCALE GENOMIC DNA]</scope>
    <source>
        <strain>ATCC BAA-1101 / DSM 17681 / MLHE-1</strain>
    </source>
</reference>
<evidence type="ECO:0000255" key="1">
    <source>
        <dbReference type="HAMAP-Rule" id="MF_01341"/>
    </source>
</evidence>
<evidence type="ECO:0000256" key="2">
    <source>
        <dbReference type="SAM" id="MobiDB-lite"/>
    </source>
</evidence>
<evidence type="ECO:0000305" key="3"/>
<protein>
    <recommendedName>
        <fullName evidence="1">Large ribosomal subunit protein uL15</fullName>
    </recommendedName>
    <alternativeName>
        <fullName evidence="3">50S ribosomal protein L15</fullName>
    </alternativeName>
</protein>
<comment type="function">
    <text evidence="1">Binds to the 23S rRNA.</text>
</comment>
<comment type="subunit">
    <text evidence="1">Part of the 50S ribosomal subunit.</text>
</comment>
<comment type="similarity">
    <text evidence="1">Belongs to the universal ribosomal protein uL15 family.</text>
</comment>
<gene>
    <name evidence="1" type="primary">rplO</name>
    <name type="ordered locus">Mlg_0477</name>
</gene>
<name>RL15_ALKEH</name>
<dbReference type="EMBL" id="CP000453">
    <property type="protein sequence ID" value="ABI55831.1"/>
    <property type="molecule type" value="Genomic_DNA"/>
</dbReference>
<dbReference type="RefSeq" id="WP_011628226.1">
    <property type="nucleotide sequence ID" value="NC_008340.1"/>
</dbReference>
<dbReference type="SMR" id="Q0ABF6"/>
<dbReference type="KEGG" id="aeh:Mlg_0477"/>
<dbReference type="eggNOG" id="COG0200">
    <property type="taxonomic scope" value="Bacteria"/>
</dbReference>
<dbReference type="HOGENOM" id="CLU_055188_4_2_6"/>
<dbReference type="OrthoDB" id="9810293at2"/>
<dbReference type="Proteomes" id="UP000001962">
    <property type="component" value="Chromosome"/>
</dbReference>
<dbReference type="GO" id="GO:0022625">
    <property type="term" value="C:cytosolic large ribosomal subunit"/>
    <property type="evidence" value="ECO:0007669"/>
    <property type="project" value="TreeGrafter"/>
</dbReference>
<dbReference type="GO" id="GO:0019843">
    <property type="term" value="F:rRNA binding"/>
    <property type="evidence" value="ECO:0007669"/>
    <property type="project" value="UniProtKB-UniRule"/>
</dbReference>
<dbReference type="GO" id="GO:0003735">
    <property type="term" value="F:structural constituent of ribosome"/>
    <property type="evidence" value="ECO:0007669"/>
    <property type="project" value="InterPro"/>
</dbReference>
<dbReference type="GO" id="GO:0006412">
    <property type="term" value="P:translation"/>
    <property type="evidence" value="ECO:0007669"/>
    <property type="project" value="UniProtKB-UniRule"/>
</dbReference>
<dbReference type="Gene3D" id="3.100.10.10">
    <property type="match status" value="1"/>
</dbReference>
<dbReference type="HAMAP" id="MF_01341">
    <property type="entry name" value="Ribosomal_uL15"/>
    <property type="match status" value="1"/>
</dbReference>
<dbReference type="InterPro" id="IPR030878">
    <property type="entry name" value="Ribosomal_uL15"/>
</dbReference>
<dbReference type="InterPro" id="IPR021131">
    <property type="entry name" value="Ribosomal_uL15/eL18"/>
</dbReference>
<dbReference type="InterPro" id="IPR036227">
    <property type="entry name" value="Ribosomal_uL15/eL18_sf"/>
</dbReference>
<dbReference type="InterPro" id="IPR005749">
    <property type="entry name" value="Ribosomal_uL15_bac-type"/>
</dbReference>
<dbReference type="InterPro" id="IPR001196">
    <property type="entry name" value="Ribosomal_uL15_CS"/>
</dbReference>
<dbReference type="NCBIfam" id="TIGR01071">
    <property type="entry name" value="rplO_bact"/>
    <property type="match status" value="1"/>
</dbReference>
<dbReference type="PANTHER" id="PTHR12934">
    <property type="entry name" value="50S RIBOSOMAL PROTEIN L15"/>
    <property type="match status" value="1"/>
</dbReference>
<dbReference type="PANTHER" id="PTHR12934:SF11">
    <property type="entry name" value="LARGE RIBOSOMAL SUBUNIT PROTEIN UL15M"/>
    <property type="match status" value="1"/>
</dbReference>
<dbReference type="Pfam" id="PF00828">
    <property type="entry name" value="Ribosomal_L27A"/>
    <property type="match status" value="1"/>
</dbReference>
<dbReference type="SUPFAM" id="SSF52080">
    <property type="entry name" value="Ribosomal proteins L15p and L18e"/>
    <property type="match status" value="1"/>
</dbReference>
<dbReference type="PROSITE" id="PS00475">
    <property type="entry name" value="RIBOSOMAL_L15"/>
    <property type="match status" value="1"/>
</dbReference>
<keyword id="KW-1185">Reference proteome</keyword>
<keyword id="KW-0687">Ribonucleoprotein</keyword>
<keyword id="KW-0689">Ribosomal protein</keyword>
<keyword id="KW-0694">RNA-binding</keyword>
<keyword id="KW-0699">rRNA-binding</keyword>
<organism>
    <name type="scientific">Alkalilimnicola ehrlichii (strain ATCC BAA-1101 / DSM 17681 / MLHE-1)</name>
    <dbReference type="NCBI Taxonomy" id="187272"/>
    <lineage>
        <taxon>Bacteria</taxon>
        <taxon>Pseudomonadati</taxon>
        <taxon>Pseudomonadota</taxon>
        <taxon>Gammaproteobacteria</taxon>
        <taxon>Chromatiales</taxon>
        <taxon>Ectothiorhodospiraceae</taxon>
        <taxon>Alkalilimnicola</taxon>
    </lineage>
</organism>
<feature type="chain" id="PRO_1000054422" description="Large ribosomal subunit protein uL15">
    <location>
        <begin position="1"/>
        <end position="144"/>
    </location>
</feature>
<feature type="region of interest" description="Disordered" evidence="2">
    <location>
        <begin position="1"/>
        <end position="60"/>
    </location>
</feature>
<feature type="compositionally biased region" description="Gly residues" evidence="2">
    <location>
        <begin position="21"/>
        <end position="31"/>
    </location>
</feature>